<reference key="1">
    <citation type="submission" date="2005-03" db="EMBL/GenBank/DDBJ databases">
        <title>Brevibacillus brevis strain 47, complete genome.</title>
        <authorList>
            <person name="Hosoyama A."/>
            <person name="Yamada R."/>
            <person name="Hongo Y."/>
            <person name="Terui Y."/>
            <person name="Ankai A."/>
            <person name="Masuyama W."/>
            <person name="Sekiguchi M."/>
            <person name="Takeda T."/>
            <person name="Asano K."/>
            <person name="Ohji S."/>
            <person name="Ichikawa N."/>
            <person name="Narita S."/>
            <person name="Aoki N."/>
            <person name="Miura H."/>
            <person name="Matsushita S."/>
            <person name="Sekigawa T."/>
            <person name="Yamagata H."/>
            <person name="Yoshikawa H."/>
            <person name="Udaka S."/>
            <person name="Tanikawa S."/>
            <person name="Fujita N."/>
        </authorList>
    </citation>
    <scope>NUCLEOTIDE SEQUENCE [LARGE SCALE GENOMIC DNA]</scope>
    <source>
        <strain>47 / JCM 6285 / NBRC 100599</strain>
    </source>
</reference>
<comment type="function">
    <text evidence="1">Transfers an acetyl group from acetyl-CoA to L-homoserine, forming acetyl-L-homoserine.</text>
</comment>
<comment type="catalytic activity">
    <reaction evidence="1">
        <text>L-homoserine + acetyl-CoA = O-acetyl-L-homoserine + CoA</text>
        <dbReference type="Rhea" id="RHEA:13701"/>
        <dbReference type="ChEBI" id="CHEBI:57287"/>
        <dbReference type="ChEBI" id="CHEBI:57288"/>
        <dbReference type="ChEBI" id="CHEBI:57476"/>
        <dbReference type="ChEBI" id="CHEBI:57716"/>
        <dbReference type="EC" id="2.3.1.31"/>
    </reaction>
</comment>
<comment type="pathway">
    <text evidence="1">Amino-acid biosynthesis; L-methionine biosynthesis via de novo pathway; O-acetyl-L-homoserine from L-homoserine: step 1/1.</text>
</comment>
<comment type="subcellular location">
    <subcellularLocation>
        <location evidence="1">Cytoplasm</location>
    </subcellularLocation>
</comment>
<comment type="similarity">
    <text evidence="1">Belongs to the MetA family.</text>
</comment>
<feature type="chain" id="PRO_1000132700" description="Homoserine O-acetyltransferase">
    <location>
        <begin position="1"/>
        <end position="306"/>
    </location>
</feature>
<feature type="active site" description="Acyl-thioester intermediate" evidence="1">
    <location>
        <position position="142"/>
    </location>
</feature>
<feature type="active site" description="Proton acceptor" evidence="1">
    <location>
        <position position="235"/>
    </location>
</feature>
<feature type="active site" evidence="1">
    <location>
        <position position="237"/>
    </location>
</feature>
<feature type="binding site" evidence="1">
    <location>
        <position position="163"/>
    </location>
    <ligand>
        <name>substrate</name>
    </ligand>
</feature>
<feature type="binding site" evidence="1">
    <location>
        <position position="192"/>
    </location>
    <ligand>
        <name>substrate</name>
    </ligand>
</feature>
<feature type="binding site" evidence="1">
    <location>
        <position position="249"/>
    </location>
    <ligand>
        <name>substrate</name>
    </ligand>
</feature>
<feature type="site" description="Important for acyl-CoA specificity" evidence="1">
    <location>
        <position position="111"/>
    </location>
</feature>
<feature type="site" description="Important for substrate specificity" evidence="1">
    <location>
        <position position="192"/>
    </location>
</feature>
<protein>
    <recommendedName>
        <fullName evidence="1">Homoserine O-acetyltransferase</fullName>
        <shortName evidence="1">HAT</shortName>
        <ecNumber evidence="1">2.3.1.31</ecNumber>
    </recommendedName>
    <alternativeName>
        <fullName evidence="1">Homoserine transacetylase</fullName>
        <shortName evidence="1">HTA</shortName>
    </alternativeName>
</protein>
<organism>
    <name type="scientific">Brevibacillus brevis (strain 47 / JCM 6285 / NBRC 100599)</name>
    <dbReference type="NCBI Taxonomy" id="358681"/>
    <lineage>
        <taxon>Bacteria</taxon>
        <taxon>Bacillati</taxon>
        <taxon>Bacillota</taxon>
        <taxon>Bacilli</taxon>
        <taxon>Bacillales</taxon>
        <taxon>Paenibacillaceae</taxon>
        <taxon>Brevibacillus</taxon>
    </lineage>
</organism>
<proteinExistence type="inferred from homology"/>
<dbReference type="EC" id="2.3.1.31" evidence="1"/>
<dbReference type="EMBL" id="AP008955">
    <property type="protein sequence ID" value="BAH41830.1"/>
    <property type="molecule type" value="Genomic_DNA"/>
</dbReference>
<dbReference type="RefSeq" id="WP_012684591.1">
    <property type="nucleotide sequence ID" value="NC_012491.1"/>
</dbReference>
<dbReference type="SMR" id="C0Z4V3"/>
<dbReference type="STRING" id="358681.BBR47_08530"/>
<dbReference type="KEGG" id="bbe:BBR47_08530"/>
<dbReference type="eggNOG" id="COG1897">
    <property type="taxonomic scope" value="Bacteria"/>
</dbReference>
<dbReference type="HOGENOM" id="CLU_057851_0_1_9"/>
<dbReference type="UniPathway" id="UPA00051">
    <property type="reaction ID" value="UER00074"/>
</dbReference>
<dbReference type="Proteomes" id="UP000001877">
    <property type="component" value="Chromosome"/>
</dbReference>
<dbReference type="GO" id="GO:0005737">
    <property type="term" value="C:cytoplasm"/>
    <property type="evidence" value="ECO:0007669"/>
    <property type="project" value="UniProtKB-SubCell"/>
</dbReference>
<dbReference type="GO" id="GO:0004414">
    <property type="term" value="F:homoserine O-acetyltransferase activity"/>
    <property type="evidence" value="ECO:0007669"/>
    <property type="project" value="UniProtKB-EC"/>
</dbReference>
<dbReference type="GO" id="GO:0008899">
    <property type="term" value="F:homoserine O-succinyltransferase activity"/>
    <property type="evidence" value="ECO:0007669"/>
    <property type="project" value="UniProtKB-UniRule"/>
</dbReference>
<dbReference type="GO" id="GO:0019281">
    <property type="term" value="P:L-methionine biosynthetic process from homoserine via O-succinyl-L-homoserine and cystathionine"/>
    <property type="evidence" value="ECO:0007669"/>
    <property type="project" value="InterPro"/>
</dbReference>
<dbReference type="CDD" id="cd03131">
    <property type="entry name" value="GATase1_HTS"/>
    <property type="match status" value="1"/>
</dbReference>
<dbReference type="FunFam" id="3.40.50.880:FF:000004">
    <property type="entry name" value="Homoserine O-succinyltransferase"/>
    <property type="match status" value="1"/>
</dbReference>
<dbReference type="Gene3D" id="3.40.50.880">
    <property type="match status" value="1"/>
</dbReference>
<dbReference type="HAMAP" id="MF_00295">
    <property type="entry name" value="MetA_acyltransf"/>
    <property type="match status" value="1"/>
</dbReference>
<dbReference type="InterPro" id="IPR029062">
    <property type="entry name" value="Class_I_gatase-like"/>
</dbReference>
<dbReference type="InterPro" id="IPR005697">
    <property type="entry name" value="HST_MetA"/>
</dbReference>
<dbReference type="InterPro" id="IPR033752">
    <property type="entry name" value="MetA_family"/>
</dbReference>
<dbReference type="NCBIfam" id="TIGR01001">
    <property type="entry name" value="metA"/>
    <property type="match status" value="1"/>
</dbReference>
<dbReference type="PANTHER" id="PTHR20919">
    <property type="entry name" value="HOMOSERINE O-SUCCINYLTRANSFERASE"/>
    <property type="match status" value="1"/>
</dbReference>
<dbReference type="PANTHER" id="PTHR20919:SF0">
    <property type="entry name" value="HOMOSERINE O-SUCCINYLTRANSFERASE"/>
    <property type="match status" value="1"/>
</dbReference>
<dbReference type="Pfam" id="PF04204">
    <property type="entry name" value="HTS"/>
    <property type="match status" value="1"/>
</dbReference>
<dbReference type="PIRSF" id="PIRSF000450">
    <property type="entry name" value="H_ser_succinyltr"/>
    <property type="match status" value="1"/>
</dbReference>
<dbReference type="SUPFAM" id="SSF52317">
    <property type="entry name" value="Class I glutamine amidotransferase-like"/>
    <property type="match status" value="1"/>
</dbReference>
<name>METAA_BREBN</name>
<evidence type="ECO:0000255" key="1">
    <source>
        <dbReference type="HAMAP-Rule" id="MF_00295"/>
    </source>
</evidence>
<gene>
    <name evidence="1" type="primary">metAA</name>
    <name type="ordered locus">BBR47_08530</name>
</gene>
<keyword id="KW-0012">Acyltransferase</keyword>
<keyword id="KW-0028">Amino-acid biosynthesis</keyword>
<keyword id="KW-0963">Cytoplasm</keyword>
<keyword id="KW-0486">Methionine biosynthesis</keyword>
<keyword id="KW-1185">Reference proteome</keyword>
<keyword id="KW-0808">Transferase</keyword>
<sequence>MPIKLPDELPATEILAQENIFVMKDSRAFTQDIRPLRIVILNLMPVKETTETQLLRLLGNTPLQVEIVLLHMSSHTSKNTSEEHLSLFYKTFEEIRDQRFDGMIITGAPVEQLEFTDVTYWQELTEILDWKMENVTSTLHICWGAQAGLYHHFGVQKHPLPEKMFGIFPHTLNKQNVKLFRGFDNYFHIPHSRHTENRREDIEQVPELEILSESDEAGVYIVATRDGRQIFVTGHSEYDPTTLQDEYQRDVNKGLDIAVPRNYYPKDDPSREPIVTWRAHANLMFSNWLNYYVYQETPYDLNNDKR</sequence>
<accession>C0Z4V3</accession>